<evidence type="ECO:0000250" key="1"/>
<evidence type="ECO:0000255" key="2">
    <source>
        <dbReference type="HAMAP-Rule" id="MF_00248"/>
    </source>
</evidence>
<protein>
    <recommendedName>
        <fullName evidence="2">ATP-dependent protease subunit HslV</fullName>
        <ecNumber evidence="2">3.4.25.2</ecNumber>
    </recommendedName>
</protein>
<name>HSLV_WIGBR</name>
<sequence length="180" mass="19795">MTTIVSVRRNGHIVIGGDGQATLGNTIMKNNVKKVRTLYNDTVIAGFAGGTADAFTLFELFEKKLQIHQGRFVKSAVELAKDWRTDRMLRRLEALLAVADKNTSLIITGNADVIQPESDVIAIGSGGPYAQSAARALLENTDLCARDIVRKSLQISGDICLYSNHFFSFEELIHENKDII</sequence>
<dbReference type="EC" id="3.4.25.2" evidence="2"/>
<dbReference type="EMBL" id="BA000021">
    <property type="protein sequence ID" value="BAC24424.1"/>
    <property type="molecule type" value="Genomic_DNA"/>
</dbReference>
<dbReference type="SMR" id="Q8D2S6"/>
<dbReference type="STRING" id="36870.gene:10368771"/>
<dbReference type="MEROPS" id="T01.006"/>
<dbReference type="KEGG" id="wbr:hslV"/>
<dbReference type="eggNOG" id="COG5405">
    <property type="taxonomic scope" value="Bacteria"/>
</dbReference>
<dbReference type="HOGENOM" id="CLU_093872_1_0_6"/>
<dbReference type="OrthoDB" id="9804884at2"/>
<dbReference type="Proteomes" id="UP000000562">
    <property type="component" value="Chromosome"/>
</dbReference>
<dbReference type="GO" id="GO:0009376">
    <property type="term" value="C:HslUV protease complex"/>
    <property type="evidence" value="ECO:0007669"/>
    <property type="project" value="UniProtKB-UniRule"/>
</dbReference>
<dbReference type="GO" id="GO:0005839">
    <property type="term" value="C:proteasome core complex"/>
    <property type="evidence" value="ECO:0007669"/>
    <property type="project" value="InterPro"/>
</dbReference>
<dbReference type="GO" id="GO:0046872">
    <property type="term" value="F:metal ion binding"/>
    <property type="evidence" value="ECO:0007669"/>
    <property type="project" value="UniProtKB-KW"/>
</dbReference>
<dbReference type="GO" id="GO:0004298">
    <property type="term" value="F:threonine-type endopeptidase activity"/>
    <property type="evidence" value="ECO:0007669"/>
    <property type="project" value="UniProtKB-KW"/>
</dbReference>
<dbReference type="GO" id="GO:0051603">
    <property type="term" value="P:proteolysis involved in protein catabolic process"/>
    <property type="evidence" value="ECO:0007669"/>
    <property type="project" value="InterPro"/>
</dbReference>
<dbReference type="CDD" id="cd01913">
    <property type="entry name" value="protease_HslV"/>
    <property type="match status" value="1"/>
</dbReference>
<dbReference type="FunFam" id="3.60.20.10:FF:000002">
    <property type="entry name" value="ATP-dependent protease subunit HslV"/>
    <property type="match status" value="1"/>
</dbReference>
<dbReference type="Gene3D" id="3.60.20.10">
    <property type="entry name" value="Glutamine Phosphoribosylpyrophosphate, subunit 1, domain 1"/>
    <property type="match status" value="1"/>
</dbReference>
<dbReference type="HAMAP" id="MF_00248">
    <property type="entry name" value="HslV"/>
    <property type="match status" value="1"/>
</dbReference>
<dbReference type="InterPro" id="IPR022281">
    <property type="entry name" value="ATP-dep_Prtase_HsIV_su"/>
</dbReference>
<dbReference type="InterPro" id="IPR029055">
    <property type="entry name" value="Ntn_hydrolases_N"/>
</dbReference>
<dbReference type="InterPro" id="IPR001353">
    <property type="entry name" value="Proteasome_sua/b"/>
</dbReference>
<dbReference type="InterPro" id="IPR023333">
    <property type="entry name" value="Proteasome_suB-type"/>
</dbReference>
<dbReference type="NCBIfam" id="TIGR03692">
    <property type="entry name" value="ATP_dep_HslV"/>
    <property type="match status" value="1"/>
</dbReference>
<dbReference type="NCBIfam" id="NF003964">
    <property type="entry name" value="PRK05456.1"/>
    <property type="match status" value="1"/>
</dbReference>
<dbReference type="PANTHER" id="PTHR32194:SF0">
    <property type="entry name" value="ATP-DEPENDENT PROTEASE SUBUNIT HSLV"/>
    <property type="match status" value="1"/>
</dbReference>
<dbReference type="PANTHER" id="PTHR32194">
    <property type="entry name" value="METALLOPROTEASE TLDD"/>
    <property type="match status" value="1"/>
</dbReference>
<dbReference type="Pfam" id="PF00227">
    <property type="entry name" value="Proteasome"/>
    <property type="match status" value="1"/>
</dbReference>
<dbReference type="PIRSF" id="PIRSF039093">
    <property type="entry name" value="HslV"/>
    <property type="match status" value="1"/>
</dbReference>
<dbReference type="SUPFAM" id="SSF56235">
    <property type="entry name" value="N-terminal nucleophile aminohydrolases (Ntn hydrolases)"/>
    <property type="match status" value="1"/>
</dbReference>
<dbReference type="PROSITE" id="PS51476">
    <property type="entry name" value="PROTEASOME_BETA_2"/>
    <property type="match status" value="1"/>
</dbReference>
<accession>Q8D2S6</accession>
<reference key="1">
    <citation type="journal article" date="2002" name="Nat. Genet.">
        <title>Genome sequence of the endocellular obligate symbiont of tsetse flies, Wigglesworthia glossinidia.</title>
        <authorList>
            <person name="Akman L."/>
            <person name="Yamashita A."/>
            <person name="Watanabe H."/>
            <person name="Oshima K."/>
            <person name="Shiba T."/>
            <person name="Hattori M."/>
            <person name="Aksoy S."/>
        </authorList>
    </citation>
    <scope>NUCLEOTIDE SEQUENCE [LARGE SCALE GENOMIC DNA]</scope>
</reference>
<feature type="initiator methionine" description="Removed" evidence="1">
    <location>
        <position position="1"/>
    </location>
</feature>
<feature type="chain" id="PRO_0000148161" description="ATP-dependent protease subunit HslV">
    <location>
        <begin position="2"/>
        <end position="180"/>
    </location>
</feature>
<feature type="active site" evidence="2">
    <location>
        <position position="2"/>
    </location>
</feature>
<feature type="binding site" evidence="2">
    <location>
        <position position="157"/>
    </location>
    <ligand>
        <name>Na(+)</name>
        <dbReference type="ChEBI" id="CHEBI:29101"/>
    </ligand>
</feature>
<feature type="binding site" evidence="2">
    <location>
        <position position="160"/>
    </location>
    <ligand>
        <name>Na(+)</name>
        <dbReference type="ChEBI" id="CHEBI:29101"/>
    </ligand>
</feature>
<feature type="binding site" evidence="2">
    <location>
        <position position="163"/>
    </location>
    <ligand>
        <name>Na(+)</name>
        <dbReference type="ChEBI" id="CHEBI:29101"/>
    </ligand>
</feature>
<proteinExistence type="inferred from homology"/>
<organism>
    <name type="scientific">Wigglesworthia glossinidia brevipalpis</name>
    <dbReference type="NCBI Taxonomy" id="36870"/>
    <lineage>
        <taxon>Bacteria</taxon>
        <taxon>Pseudomonadati</taxon>
        <taxon>Pseudomonadota</taxon>
        <taxon>Gammaproteobacteria</taxon>
        <taxon>Enterobacterales</taxon>
        <taxon>Erwiniaceae</taxon>
        <taxon>Wigglesworthia</taxon>
    </lineage>
</organism>
<comment type="function">
    <text evidence="2">Protease subunit of a proteasome-like degradation complex believed to be a general protein degrading machinery.</text>
</comment>
<comment type="catalytic activity">
    <reaction evidence="2">
        <text>ATP-dependent cleavage of peptide bonds with broad specificity.</text>
        <dbReference type="EC" id="3.4.25.2"/>
    </reaction>
</comment>
<comment type="activity regulation">
    <text evidence="2">Allosterically activated by HslU binding.</text>
</comment>
<comment type="subunit">
    <text evidence="2">A double ring-shaped homohexamer of HslV is capped on each side by a ring-shaped HslU homohexamer. The assembly of the HslU/HslV complex is dependent on binding of ATP.</text>
</comment>
<comment type="subcellular location">
    <subcellularLocation>
        <location evidence="2">Cytoplasm</location>
    </subcellularLocation>
</comment>
<comment type="similarity">
    <text evidence="2">Belongs to the peptidase T1B family. HslV subfamily.</text>
</comment>
<keyword id="KW-0021">Allosteric enzyme</keyword>
<keyword id="KW-0963">Cytoplasm</keyword>
<keyword id="KW-0378">Hydrolase</keyword>
<keyword id="KW-0479">Metal-binding</keyword>
<keyword id="KW-0645">Protease</keyword>
<keyword id="KW-1185">Reference proteome</keyword>
<keyword id="KW-0915">Sodium</keyword>
<keyword id="KW-0888">Threonine protease</keyword>
<gene>
    <name evidence="2" type="primary">hslV</name>
    <name type="ordered locus">WIGBR2780</name>
</gene>